<name>GUAC_MESFL</name>
<proteinExistence type="inferred from homology"/>
<accession>Q6F1U6</accession>
<gene>
    <name evidence="1" type="primary">guaC</name>
    <name type="ordered locus">Mfl170</name>
</gene>
<organism>
    <name type="scientific">Mesoplasma florum (strain ATCC 33453 / NBRC 100688 / NCTC 11704 / L1)</name>
    <name type="common">Acholeplasma florum</name>
    <dbReference type="NCBI Taxonomy" id="265311"/>
    <lineage>
        <taxon>Bacteria</taxon>
        <taxon>Bacillati</taxon>
        <taxon>Mycoplasmatota</taxon>
        <taxon>Mollicutes</taxon>
        <taxon>Entomoplasmatales</taxon>
        <taxon>Entomoplasmataceae</taxon>
        <taxon>Mesoplasma</taxon>
    </lineage>
</organism>
<protein>
    <recommendedName>
        <fullName evidence="1">GMP reductase</fullName>
        <ecNumber evidence="1">1.7.1.7</ecNumber>
    </recommendedName>
    <alternativeName>
        <fullName evidence="1">Guanosine 5'-monophosphate oxidoreductase</fullName>
        <shortName evidence="1">Guanosine monophosphate reductase</shortName>
    </alternativeName>
</protein>
<dbReference type="EC" id="1.7.1.7" evidence="1"/>
<dbReference type="EMBL" id="AE017263">
    <property type="protein sequence ID" value="AAT75527.1"/>
    <property type="molecule type" value="Genomic_DNA"/>
</dbReference>
<dbReference type="RefSeq" id="WP_011183067.1">
    <property type="nucleotide sequence ID" value="NC_006055.1"/>
</dbReference>
<dbReference type="RefSeq" id="YP_053411.1">
    <property type="nucleotide sequence ID" value="NC_006055.1"/>
</dbReference>
<dbReference type="SMR" id="Q6F1U6"/>
<dbReference type="STRING" id="265311.Mfl170"/>
<dbReference type="PaxDb" id="265311-Mfl170"/>
<dbReference type="EnsemblBacteria" id="AAT75527">
    <property type="protein sequence ID" value="AAT75527"/>
    <property type="gene ID" value="Mfl170"/>
</dbReference>
<dbReference type="GeneID" id="2898130"/>
<dbReference type="KEGG" id="mfl:Mfl170"/>
<dbReference type="PATRIC" id="fig|265311.5.peg.171"/>
<dbReference type="eggNOG" id="COG0516">
    <property type="taxonomic scope" value="Bacteria"/>
</dbReference>
<dbReference type="HOGENOM" id="CLU_022552_5_0_14"/>
<dbReference type="OrthoDB" id="9805398at2"/>
<dbReference type="Proteomes" id="UP000006647">
    <property type="component" value="Chromosome"/>
</dbReference>
<dbReference type="GO" id="GO:0005829">
    <property type="term" value="C:cytosol"/>
    <property type="evidence" value="ECO:0007669"/>
    <property type="project" value="TreeGrafter"/>
</dbReference>
<dbReference type="GO" id="GO:1902560">
    <property type="term" value="C:GMP reductase complex"/>
    <property type="evidence" value="ECO:0007669"/>
    <property type="project" value="InterPro"/>
</dbReference>
<dbReference type="GO" id="GO:0003920">
    <property type="term" value="F:GMP reductase activity"/>
    <property type="evidence" value="ECO:0007669"/>
    <property type="project" value="UniProtKB-EC"/>
</dbReference>
<dbReference type="GO" id="GO:0006163">
    <property type="term" value="P:purine nucleotide metabolic process"/>
    <property type="evidence" value="ECO:0007669"/>
    <property type="project" value="InterPro"/>
</dbReference>
<dbReference type="CDD" id="cd00381">
    <property type="entry name" value="IMPDH"/>
    <property type="match status" value="1"/>
</dbReference>
<dbReference type="Gene3D" id="3.20.20.70">
    <property type="entry name" value="Aldolase class I"/>
    <property type="match status" value="1"/>
</dbReference>
<dbReference type="HAMAP" id="MF_01511">
    <property type="entry name" value="GMP_reduct_type2"/>
    <property type="match status" value="1"/>
</dbReference>
<dbReference type="InterPro" id="IPR013785">
    <property type="entry name" value="Aldolase_TIM"/>
</dbReference>
<dbReference type="InterPro" id="IPR050139">
    <property type="entry name" value="GMP_reductase"/>
</dbReference>
<dbReference type="InterPro" id="IPR005994">
    <property type="entry name" value="GuaC_type_2"/>
</dbReference>
<dbReference type="InterPro" id="IPR015875">
    <property type="entry name" value="IMP_DH/GMP_Rdtase_CS"/>
</dbReference>
<dbReference type="InterPro" id="IPR001093">
    <property type="entry name" value="IMP_DH_GMPRt"/>
</dbReference>
<dbReference type="NCBIfam" id="TIGR01306">
    <property type="entry name" value="GMP_reduct_2"/>
    <property type="match status" value="1"/>
</dbReference>
<dbReference type="NCBIfam" id="NF003966">
    <property type="entry name" value="PRK05458.1"/>
    <property type="match status" value="1"/>
</dbReference>
<dbReference type="PANTHER" id="PTHR43170">
    <property type="entry name" value="GMP REDUCTASE"/>
    <property type="match status" value="1"/>
</dbReference>
<dbReference type="PANTHER" id="PTHR43170:SF5">
    <property type="entry name" value="GMP REDUCTASE"/>
    <property type="match status" value="1"/>
</dbReference>
<dbReference type="Pfam" id="PF00478">
    <property type="entry name" value="IMPDH"/>
    <property type="match status" value="1"/>
</dbReference>
<dbReference type="PIRSF" id="PIRSF036500">
    <property type="entry name" value="GMP_red_Firmic"/>
    <property type="match status" value="1"/>
</dbReference>
<dbReference type="SMART" id="SM01240">
    <property type="entry name" value="IMPDH"/>
    <property type="match status" value="1"/>
</dbReference>
<dbReference type="SUPFAM" id="SSF51412">
    <property type="entry name" value="Inosine monophosphate dehydrogenase (IMPDH)"/>
    <property type="match status" value="1"/>
</dbReference>
<dbReference type="PROSITE" id="PS00487">
    <property type="entry name" value="IMP_DH_GMP_RED"/>
    <property type="match status" value="1"/>
</dbReference>
<keyword id="KW-0521">NADP</keyword>
<keyword id="KW-0560">Oxidoreductase</keyword>
<keyword id="KW-1185">Reference proteome</keyword>
<evidence type="ECO:0000255" key="1">
    <source>
        <dbReference type="HAMAP-Rule" id="MF_01511"/>
    </source>
</evidence>
<feature type="chain" id="PRO_0000294277" description="GMP reductase">
    <location>
        <begin position="1"/>
        <end position="320"/>
    </location>
</feature>
<feature type="active site" description="Thioimidate intermediate" evidence="1">
    <location>
        <position position="174"/>
    </location>
</feature>
<feature type="binding site" evidence="1">
    <location>
        <begin position="203"/>
        <end position="226"/>
    </location>
    <ligand>
        <name>NADP(+)</name>
        <dbReference type="ChEBI" id="CHEBI:58349"/>
    </ligand>
</feature>
<comment type="function">
    <text evidence="1">Catalyzes the irreversible NADPH-dependent deamination of GMP to IMP. It functions in the conversion of nucleobase, nucleoside and nucleotide derivatives of G to A nucleotides, and in maintaining the intracellular balance of A and G nucleotides.</text>
</comment>
<comment type="catalytic activity">
    <reaction evidence="1">
        <text>IMP + NH4(+) + NADP(+) = GMP + NADPH + 2 H(+)</text>
        <dbReference type="Rhea" id="RHEA:17185"/>
        <dbReference type="ChEBI" id="CHEBI:15378"/>
        <dbReference type="ChEBI" id="CHEBI:28938"/>
        <dbReference type="ChEBI" id="CHEBI:57783"/>
        <dbReference type="ChEBI" id="CHEBI:58053"/>
        <dbReference type="ChEBI" id="CHEBI:58115"/>
        <dbReference type="ChEBI" id="CHEBI:58349"/>
        <dbReference type="EC" id="1.7.1.7"/>
    </reaction>
</comment>
<comment type="similarity">
    <text evidence="1">Belongs to the IMPDH/GMPR family. GuaC type 2 subfamily.</text>
</comment>
<sequence length="320" mass="35585">MYAFDYEDIQLIPNMCVVNSRSECNTSVTLGKHTFKMPVVPANMATVINEELSIMLAEKNYFYVMHRFDFDAVSFIKKMKEKKLISSISVGVKEQDFKMINELTELNLIPDYITIDIAHGHANSVKEMIEHIRTKMGDQTFIIAGNVATPQAVRDLEHWGADATKVGVGPGKVCITKLKTGFGTGGWQLGAIKWCSKAATKPIIADGGLRVNGDIAKSIRFGATMCMIGSLFAAHEESPGKNVTVDNVLFKEYYGSASEYNKGEKRYVEGKKELIKVRGKLMDTYKEMEEDLQSSISYAGGKTLKAIKKVDYVILKTSNF</sequence>
<reference key="1">
    <citation type="submission" date="2004-06" db="EMBL/GenBank/DDBJ databases">
        <authorList>
            <person name="Birren B.W."/>
            <person name="Stange-Thomann N."/>
            <person name="Hafez N."/>
            <person name="DeCaprio D."/>
            <person name="Fisher S."/>
            <person name="Butler J."/>
            <person name="Elkins T."/>
            <person name="Kodira C.D."/>
            <person name="Major J."/>
            <person name="Wang S."/>
            <person name="Nicol R."/>
            <person name="Nusbaum C."/>
        </authorList>
    </citation>
    <scope>NUCLEOTIDE SEQUENCE [LARGE SCALE GENOMIC DNA]</scope>
    <source>
        <strain>ATCC 33453 / NBRC 100688 / NCTC 11704 / L1</strain>
    </source>
</reference>